<sequence length="219" mass="23234">MSLLVKICGLTTPETLGAALDAGAEMVGFVFFPPSPRHVGLTAARELGQQAKGRALKVALTVDADDATFENIVETLRPDLLQLHGRESVARIRDLKQRFGLPVMKAIAVATTADLVPLAGYADVCDRILFDARAPKDATRPGGLGATFDWHVLDALALDRPFMVSGGLSADNVAEAVRITRAGGVDVSSGVERAPGVKDCDMIRNFIRAARAAEELSVQ</sequence>
<comment type="catalytic activity">
    <reaction evidence="1">
        <text>N-(5-phospho-beta-D-ribosyl)anthranilate = 1-(2-carboxyphenylamino)-1-deoxy-D-ribulose 5-phosphate</text>
        <dbReference type="Rhea" id="RHEA:21540"/>
        <dbReference type="ChEBI" id="CHEBI:18277"/>
        <dbReference type="ChEBI" id="CHEBI:58613"/>
        <dbReference type="EC" id="5.3.1.24"/>
    </reaction>
</comment>
<comment type="pathway">
    <text evidence="1">Amino-acid biosynthesis; L-tryptophan biosynthesis; L-tryptophan from chorismate: step 3/5.</text>
</comment>
<comment type="similarity">
    <text evidence="1">Belongs to the TrpF family.</text>
</comment>
<keyword id="KW-0028">Amino-acid biosynthesis</keyword>
<keyword id="KW-0057">Aromatic amino acid biosynthesis</keyword>
<keyword id="KW-0413">Isomerase</keyword>
<keyword id="KW-1185">Reference proteome</keyword>
<keyword id="KW-0822">Tryptophan biosynthesis</keyword>
<accession>A5E8A5</accession>
<name>TRPF_BRASB</name>
<reference key="1">
    <citation type="journal article" date="2007" name="Science">
        <title>Legumes symbioses: absence of nod genes in photosynthetic bradyrhizobia.</title>
        <authorList>
            <person name="Giraud E."/>
            <person name="Moulin L."/>
            <person name="Vallenet D."/>
            <person name="Barbe V."/>
            <person name="Cytryn E."/>
            <person name="Avarre J.-C."/>
            <person name="Jaubert M."/>
            <person name="Simon D."/>
            <person name="Cartieaux F."/>
            <person name="Prin Y."/>
            <person name="Bena G."/>
            <person name="Hannibal L."/>
            <person name="Fardoux J."/>
            <person name="Kojadinovic M."/>
            <person name="Vuillet L."/>
            <person name="Lajus A."/>
            <person name="Cruveiller S."/>
            <person name="Rouy Z."/>
            <person name="Mangenot S."/>
            <person name="Segurens B."/>
            <person name="Dossat C."/>
            <person name="Franck W.L."/>
            <person name="Chang W.-S."/>
            <person name="Saunders E."/>
            <person name="Bruce D."/>
            <person name="Richardson P."/>
            <person name="Normand P."/>
            <person name="Dreyfus B."/>
            <person name="Pignol D."/>
            <person name="Stacey G."/>
            <person name="Emerich D."/>
            <person name="Vermeglio A."/>
            <person name="Medigue C."/>
            <person name="Sadowsky M."/>
        </authorList>
    </citation>
    <scope>NUCLEOTIDE SEQUENCE [LARGE SCALE GENOMIC DNA]</scope>
    <source>
        <strain>BTAi1 / ATCC BAA-1182</strain>
    </source>
</reference>
<gene>
    <name evidence="1" type="primary">trpF</name>
    <name type="ordered locus">BBta_0098</name>
</gene>
<organism>
    <name type="scientific">Bradyrhizobium sp. (strain BTAi1 / ATCC BAA-1182)</name>
    <dbReference type="NCBI Taxonomy" id="288000"/>
    <lineage>
        <taxon>Bacteria</taxon>
        <taxon>Pseudomonadati</taxon>
        <taxon>Pseudomonadota</taxon>
        <taxon>Alphaproteobacteria</taxon>
        <taxon>Hyphomicrobiales</taxon>
        <taxon>Nitrobacteraceae</taxon>
        <taxon>Bradyrhizobium</taxon>
    </lineage>
</organism>
<dbReference type="EC" id="5.3.1.24" evidence="1"/>
<dbReference type="EMBL" id="CP000494">
    <property type="protein sequence ID" value="ABQ32399.1"/>
    <property type="molecule type" value="Genomic_DNA"/>
</dbReference>
<dbReference type="RefSeq" id="WP_011942622.1">
    <property type="nucleotide sequence ID" value="NC_009485.1"/>
</dbReference>
<dbReference type="SMR" id="A5E8A5"/>
<dbReference type="STRING" id="288000.BBta_0098"/>
<dbReference type="KEGG" id="bbt:BBta_0098"/>
<dbReference type="eggNOG" id="COG0135">
    <property type="taxonomic scope" value="Bacteria"/>
</dbReference>
<dbReference type="HOGENOM" id="CLU_076364_1_1_5"/>
<dbReference type="OrthoDB" id="9796196at2"/>
<dbReference type="UniPathway" id="UPA00035">
    <property type="reaction ID" value="UER00042"/>
</dbReference>
<dbReference type="Proteomes" id="UP000000246">
    <property type="component" value="Chromosome"/>
</dbReference>
<dbReference type="GO" id="GO:0004640">
    <property type="term" value="F:phosphoribosylanthranilate isomerase activity"/>
    <property type="evidence" value="ECO:0007669"/>
    <property type="project" value="UniProtKB-UniRule"/>
</dbReference>
<dbReference type="GO" id="GO:0000162">
    <property type="term" value="P:L-tryptophan biosynthetic process"/>
    <property type="evidence" value="ECO:0007669"/>
    <property type="project" value="UniProtKB-UniRule"/>
</dbReference>
<dbReference type="CDD" id="cd00405">
    <property type="entry name" value="PRAI"/>
    <property type="match status" value="1"/>
</dbReference>
<dbReference type="Gene3D" id="3.20.20.70">
    <property type="entry name" value="Aldolase class I"/>
    <property type="match status" value="1"/>
</dbReference>
<dbReference type="HAMAP" id="MF_00135">
    <property type="entry name" value="PRAI"/>
    <property type="match status" value="1"/>
</dbReference>
<dbReference type="InterPro" id="IPR013785">
    <property type="entry name" value="Aldolase_TIM"/>
</dbReference>
<dbReference type="InterPro" id="IPR001240">
    <property type="entry name" value="PRAI_dom"/>
</dbReference>
<dbReference type="InterPro" id="IPR011060">
    <property type="entry name" value="RibuloseP-bd_barrel"/>
</dbReference>
<dbReference type="InterPro" id="IPR044643">
    <property type="entry name" value="TrpF_fam"/>
</dbReference>
<dbReference type="NCBIfam" id="NF002295">
    <property type="entry name" value="PRK01222.1-1"/>
    <property type="match status" value="1"/>
</dbReference>
<dbReference type="PANTHER" id="PTHR42894">
    <property type="entry name" value="N-(5'-PHOSPHORIBOSYL)ANTHRANILATE ISOMERASE"/>
    <property type="match status" value="1"/>
</dbReference>
<dbReference type="PANTHER" id="PTHR42894:SF1">
    <property type="entry name" value="N-(5'-PHOSPHORIBOSYL)ANTHRANILATE ISOMERASE"/>
    <property type="match status" value="1"/>
</dbReference>
<dbReference type="Pfam" id="PF00697">
    <property type="entry name" value="PRAI"/>
    <property type="match status" value="1"/>
</dbReference>
<dbReference type="SUPFAM" id="SSF51366">
    <property type="entry name" value="Ribulose-phoshate binding barrel"/>
    <property type="match status" value="1"/>
</dbReference>
<proteinExistence type="inferred from homology"/>
<feature type="chain" id="PRO_1000018583" description="N-(5'-phosphoribosyl)anthranilate isomerase">
    <location>
        <begin position="1"/>
        <end position="219"/>
    </location>
</feature>
<evidence type="ECO:0000255" key="1">
    <source>
        <dbReference type="HAMAP-Rule" id="MF_00135"/>
    </source>
</evidence>
<protein>
    <recommendedName>
        <fullName evidence="1">N-(5'-phosphoribosyl)anthranilate isomerase</fullName>
        <shortName evidence="1">PRAI</shortName>
        <ecNumber evidence="1">5.3.1.24</ecNumber>
    </recommendedName>
</protein>